<sequence>MPTRMITKDEVTLWSEGIGDPADAPLLLIAGGNLSARSWPDEFVERLAAAGHFVIRYDHRDTGRSSRYDFALHPYGFDELATDALAVLDAWQVRAAHVVGMSLGNTIGQLLALDAPERLLTLTVMLGGALDVDFDADLEAALKGEPSVSGLPVPSRRFLDMMMLLQQPAGTDEELLERRVEKWRLLNGEGVPFDSDEFRRRELLAAGHAGTFDEPIVHHMIPQPPVSRGAELARITTPVLAIQAMCDPAAPPPHARHLADRIPGARVVEIENMGHALPLAVHEPLAAAICAHTRAATV</sequence>
<reference key="1">
    <citation type="journal article" date="1995" name="J. Bacteriol.">
        <title>Analysis of clustered genes encoding both early and late steps in daunomycin biosynthesis by Streptomyces sp. strain C5.</title>
        <authorList>
            <person name="Dickens M.L."/>
            <person name="Ye J."/>
            <person name="Strohl W.R."/>
        </authorList>
    </citation>
    <scope>NUCLEOTIDE SEQUENCE [GENOMIC DNA]</scope>
    <source>
        <strain>C5</strain>
    </source>
</reference>
<reference key="2">
    <citation type="journal article" date="1997" name="J. Bacteriol.">
        <title>In vivo and in vitro bioconversion of epsilon-rhodomycinone glycoside to doxorubicin: functions of DauP, DauK, and DoxA.</title>
        <authorList>
            <person name="Dickens M.L."/>
            <person name="Priestley N.D."/>
            <person name="Strohl W.R."/>
        </authorList>
    </citation>
    <scope>FUNCTION</scope>
    <scope>CATALYTIC ACTIVITY</scope>
    <scope>SUBSTRATE SPECIFICITY</scope>
    <source>
        <strain>C5</strain>
    </source>
</reference>
<proteinExistence type="evidence at protein level"/>
<evidence type="ECO:0000255" key="1"/>
<evidence type="ECO:0000269" key="2">
    <source>
    </source>
</evidence>
<evidence type="ECO:0000305" key="3"/>
<keyword id="KW-0045">Antibiotic biosynthesis</keyword>
<keyword id="KW-0378">Hydrolase</keyword>
<name>DNRP_STRS5</name>
<comment type="function">
    <text evidence="2">Involved in the biosynthesis of the anthracyclines carminomycin and daunorubicin (daunomycin) which are aromatic polyketide antibiotics that exhibit high cytotoxicity and are widely applied in the chemotherapy of a variety of cancers. Catalyzes the removal of methyl group from the carbomethoxy group of rhodomycin D (10-carbomethoxy-13-deoxycarminomycin) and 4-O-methylrhodomycin D to yield 10-carboxy-13-deoxycarminomycin and 10-carboxy-13-deoxydaunorubicin, respectively. Could be also involved in the decarboxylation of 10-carboxy-13-deoxycarminomycin and 10-carboxy-13-deoxydaunorubicin to yield 13-deoxycarminomycin and 13-deoxydaunorubicin, respectively. It seems that DauK may influence the ability of DauP to carry out the decarboxylation.</text>
</comment>
<comment type="catalytic activity">
    <reaction evidence="2">
        <text>rhodomycin D + H2O = 10-carboxy-13-deoxycarminomycin + methanol + H(+)</text>
        <dbReference type="Rhea" id="RHEA:40247"/>
        <dbReference type="ChEBI" id="CHEBI:15377"/>
        <dbReference type="ChEBI" id="CHEBI:15378"/>
        <dbReference type="ChEBI" id="CHEBI:17790"/>
        <dbReference type="ChEBI" id="CHEBI:77073"/>
        <dbReference type="ChEBI" id="CHEBI:77077"/>
    </reaction>
</comment>
<comment type="catalytic activity">
    <reaction evidence="2">
        <text>4-O-methylrhodomycin D + H2O = 10-carboxy-13-deoxydaunorubicin + methanol + H(+)</text>
        <dbReference type="Rhea" id="RHEA:40251"/>
        <dbReference type="ChEBI" id="CHEBI:15377"/>
        <dbReference type="ChEBI" id="CHEBI:15378"/>
        <dbReference type="ChEBI" id="CHEBI:17790"/>
        <dbReference type="ChEBI" id="CHEBI:77074"/>
        <dbReference type="ChEBI" id="CHEBI:77076"/>
    </reaction>
</comment>
<comment type="pathway">
    <text>Antibiotic biosynthesis; daunorubicin biosynthesis.</text>
</comment>
<comment type="pathway">
    <text>Antibiotic biosynthesis; carminomycin biosynthesis.</text>
</comment>
<comment type="similarity">
    <text evidence="3">Belongs to the methyl esterase DnrP family.</text>
</comment>
<gene>
    <name type="primary">dauP</name>
</gene>
<protein>
    <recommendedName>
        <fullName>Rhodomycin D methylesterase DauP</fullName>
        <ecNumber>3.1.1.-</ecNumber>
    </recommendedName>
    <alternativeName>
        <fullName>10-carbomethoxy-13-deoxycarminomycin esterase</fullName>
    </alternativeName>
    <alternativeName>
        <fullName>4-O-methylrhodomycin D methylesterase</fullName>
    </alternativeName>
</protein>
<dbReference type="EC" id="3.1.1.-"/>
<dbReference type="EMBL" id="L35154">
    <property type="protein sequence ID" value="AAB16939.1"/>
    <property type="molecule type" value="Genomic_DNA"/>
</dbReference>
<dbReference type="SMR" id="Q55217"/>
<dbReference type="ESTHER" id="strsp-dauP">
    <property type="family name" value="Aclacinomycin-methylesterase_RdmC"/>
</dbReference>
<dbReference type="KEGG" id="ag:AAB16939"/>
<dbReference type="BioCyc" id="MetaCyc:MONOMER-18183"/>
<dbReference type="UniPathway" id="UPA00054"/>
<dbReference type="UniPathway" id="UPA01040"/>
<dbReference type="GO" id="GO:0016872">
    <property type="term" value="F:intramolecular lyase activity"/>
    <property type="evidence" value="ECO:0000314"/>
    <property type="project" value="UniProtKB"/>
</dbReference>
<dbReference type="GO" id="GO:0004806">
    <property type="term" value="F:triacylglycerol lipase activity"/>
    <property type="evidence" value="ECO:0007669"/>
    <property type="project" value="TreeGrafter"/>
</dbReference>
<dbReference type="GO" id="GO:0017000">
    <property type="term" value="P:antibiotic biosynthetic process"/>
    <property type="evidence" value="ECO:0000315"/>
    <property type="project" value="UniProtKB"/>
</dbReference>
<dbReference type="GO" id="GO:1901771">
    <property type="term" value="P:daunorubicin biosynthetic process"/>
    <property type="evidence" value="ECO:0000315"/>
    <property type="project" value="UniProtKB"/>
</dbReference>
<dbReference type="GO" id="GO:0044598">
    <property type="term" value="P:doxorubicin metabolic process"/>
    <property type="evidence" value="ECO:0000315"/>
    <property type="project" value="UniProtKB"/>
</dbReference>
<dbReference type="GO" id="GO:0046503">
    <property type="term" value="P:glycerolipid catabolic process"/>
    <property type="evidence" value="ECO:0007669"/>
    <property type="project" value="TreeGrafter"/>
</dbReference>
<dbReference type="FunFam" id="3.40.50.1820:FF:000592">
    <property type="entry name" value="Aclacinomycin methylesterase RdmC"/>
    <property type="match status" value="1"/>
</dbReference>
<dbReference type="Gene3D" id="3.40.50.1820">
    <property type="entry name" value="alpha/beta hydrolase"/>
    <property type="match status" value="1"/>
</dbReference>
<dbReference type="InterPro" id="IPR050471">
    <property type="entry name" value="AB_hydrolase"/>
</dbReference>
<dbReference type="InterPro" id="IPR000073">
    <property type="entry name" value="AB_hydrolase_1"/>
</dbReference>
<dbReference type="InterPro" id="IPR029058">
    <property type="entry name" value="AB_hydrolase_fold"/>
</dbReference>
<dbReference type="PANTHER" id="PTHR43433:SF5">
    <property type="entry name" value="AB HYDROLASE-1 DOMAIN-CONTAINING PROTEIN"/>
    <property type="match status" value="1"/>
</dbReference>
<dbReference type="PANTHER" id="PTHR43433">
    <property type="entry name" value="HYDROLASE, ALPHA/BETA FOLD FAMILY PROTEIN"/>
    <property type="match status" value="1"/>
</dbReference>
<dbReference type="Pfam" id="PF00561">
    <property type="entry name" value="Abhydrolase_1"/>
    <property type="match status" value="1"/>
</dbReference>
<dbReference type="SUPFAM" id="SSF53474">
    <property type="entry name" value="alpha/beta-Hydrolases"/>
    <property type="match status" value="1"/>
</dbReference>
<accession>Q55217</accession>
<feature type="chain" id="PRO_0000425680" description="Rhodomycin D methylesterase DauP">
    <location>
        <begin position="1"/>
        <end position="298"/>
    </location>
</feature>
<feature type="domain" description="AB hydrolase-1" evidence="1">
    <location>
        <begin position="25"/>
        <end position="277"/>
    </location>
</feature>
<organism>
    <name type="scientific">Streptomyces sp. (strain C5)</name>
    <dbReference type="NCBI Taxonomy" id="45212"/>
    <lineage>
        <taxon>Bacteria</taxon>
        <taxon>Bacillati</taxon>
        <taxon>Actinomycetota</taxon>
        <taxon>Actinomycetes</taxon>
        <taxon>Kitasatosporales</taxon>
        <taxon>Streptomycetaceae</taxon>
        <taxon>Streptomyces</taxon>
    </lineage>
</organism>